<dbReference type="EMBL" id="AB000846">
    <property type="protein sequence ID" value="BAA23305.1"/>
    <property type="molecule type" value="mRNA"/>
</dbReference>
<dbReference type="SMR" id="O42334"/>
<dbReference type="GlyCosmos" id="O42334">
    <property type="glycosylation" value="2 sites, No reported glycans"/>
</dbReference>
<dbReference type="GO" id="GO:0005886">
    <property type="term" value="C:plasma membrane"/>
    <property type="evidence" value="ECO:0007669"/>
    <property type="project" value="TreeGrafter"/>
</dbReference>
<dbReference type="GO" id="GO:0097108">
    <property type="term" value="F:hedgehog family protein binding"/>
    <property type="evidence" value="ECO:0007669"/>
    <property type="project" value="TreeGrafter"/>
</dbReference>
<dbReference type="GO" id="GO:0008158">
    <property type="term" value="F:hedgehog receptor activity"/>
    <property type="evidence" value="ECO:0007669"/>
    <property type="project" value="TreeGrafter"/>
</dbReference>
<dbReference type="GO" id="GO:0005119">
    <property type="term" value="F:smoothened binding"/>
    <property type="evidence" value="ECO:0007669"/>
    <property type="project" value="TreeGrafter"/>
</dbReference>
<dbReference type="GO" id="GO:0045879">
    <property type="term" value="P:negative regulation of smoothened signaling pathway"/>
    <property type="evidence" value="ECO:0007669"/>
    <property type="project" value="TreeGrafter"/>
</dbReference>
<dbReference type="InterPro" id="IPR000731">
    <property type="entry name" value="SSD"/>
</dbReference>
<dbReference type="PANTHER" id="PTHR46022">
    <property type="entry name" value="PROTEIN PATCHED"/>
    <property type="match status" value="1"/>
</dbReference>
<dbReference type="PANTHER" id="PTHR46022:SF3">
    <property type="entry name" value="PROTEIN PATCHED HOMOLOG 2"/>
    <property type="match status" value="1"/>
</dbReference>
<dbReference type="PROSITE" id="PS50156">
    <property type="entry name" value="SSD"/>
    <property type="match status" value="1"/>
</dbReference>
<accession>O42334</accession>
<keyword id="KW-0325">Glycoprotein</keyword>
<keyword id="KW-0472">Membrane</keyword>
<keyword id="KW-0675">Receptor</keyword>
<keyword id="KW-0812">Transmembrane</keyword>
<keyword id="KW-1133">Transmembrane helix</keyword>
<protein>
    <recommendedName>
        <fullName>Protein patched homolog 2</fullName>
        <shortName>PTC2</shortName>
    </recommendedName>
</protein>
<feature type="chain" id="PRO_0000205972" description="Protein patched homolog 2">
    <location>
        <begin position="1" status="less than"/>
        <end position="255" status="greater than"/>
    </location>
</feature>
<feature type="topological domain" description="Extracellular" evidence="1">
    <location>
        <begin position="1" status="less than"/>
        <end position="197"/>
    </location>
</feature>
<feature type="transmembrane region" description="Helical" evidence="1">
    <location>
        <begin position="198"/>
        <end position="218"/>
    </location>
</feature>
<feature type="topological domain" description="Cytoplasmic" evidence="1">
    <location>
        <begin position="219"/>
        <end position="227"/>
    </location>
</feature>
<feature type="transmembrane region" description="Helical" evidence="1">
    <location>
        <begin position="228"/>
        <end position="248"/>
    </location>
</feature>
<feature type="topological domain" description="Extracellular" evidence="1">
    <location>
        <begin position="249"/>
        <end position="255" status="greater than"/>
    </location>
</feature>
<feature type="domain" description="SSD" evidence="2">
    <location>
        <begin position="199"/>
        <end position="255" status="greater than"/>
    </location>
</feature>
<feature type="glycosylation site" description="N-linked (GlcNAc...) asparagine" evidence="1">
    <location>
        <position position="147"/>
    </location>
</feature>
<feature type="glycosylation site" description="N-linked (GlcNAc...) asparagine" evidence="1">
    <location>
        <position position="175"/>
    </location>
</feature>
<feature type="non-terminal residue">
    <location>
        <position position="1"/>
    </location>
</feature>
<feature type="non-terminal residue">
    <location>
        <position position="255"/>
    </location>
</feature>
<name>PTC2_CYNPY</name>
<evidence type="ECO:0000255" key="1"/>
<evidence type="ECO:0000255" key="2">
    <source>
        <dbReference type="PROSITE-ProRule" id="PRU00199"/>
    </source>
</evidence>
<evidence type="ECO:0000305" key="3"/>
<reference key="1">
    <citation type="journal article" date="1997" name="FEBS Lett.">
        <title>Hedgehog and patched gene expression in adult ocular tissues.</title>
        <authorList>
            <person name="Takabatake T."/>
            <person name="Ogawa M."/>
            <person name="Takahashi T.C."/>
            <person name="Mizuno M."/>
            <person name="Okamoto M."/>
            <person name="Takeshima K."/>
        </authorList>
    </citation>
    <scope>NUCLEOTIDE SEQUENCE [MRNA]</scope>
    <source>
        <tissue>Neuroretina</tissue>
    </source>
</reference>
<comment type="function">
    <text>May act as a receptor for sonic hedgehog (SHH).</text>
</comment>
<comment type="subcellular location">
    <subcellularLocation>
        <location>Membrane</location>
        <topology>Multi-pass membrane protein</topology>
    </subcellularLocation>
</comment>
<comment type="tissue specificity">
    <text>In the eye, detected in neural retina, iris, retinal pigment epithelium, but not in lens.</text>
</comment>
<comment type="induction">
    <text>Activated by hedgehog.</text>
</comment>
<comment type="similarity">
    <text evidence="3">Belongs to the patched family.</text>
</comment>
<gene>
    <name type="primary">PTC2</name>
</gene>
<sequence length="255" mass="28392">SLLQGGSAYLPGRPEIQWKNLNPMQLMEELGQFTSVDGFKEMLDKADVGQAYMERPCLDPMDPQCPESAPNKQKRRVPNIAQELAGGCYGFSKRFMHWQEELILGGTVRDSQDRLLSAEALQTMFLLMSSRQLYEHFRDNYEIHDINWTEEKAAAILETWQRKFVELAQQSAPENSSQIIHAFSTTTLNDIMKSFSDVSVIRVAGGYLLMLAYACVTMLRWDCTKSQGAVGLAGVLLVALSVASGLGLCSLLGIS</sequence>
<organism>
    <name type="scientific">Cynops pyrrhogaster</name>
    <name type="common">Japanese fire-bellied newt</name>
    <name type="synonym">Molge pyrrhogaster</name>
    <dbReference type="NCBI Taxonomy" id="8330"/>
    <lineage>
        <taxon>Eukaryota</taxon>
        <taxon>Metazoa</taxon>
        <taxon>Chordata</taxon>
        <taxon>Craniata</taxon>
        <taxon>Vertebrata</taxon>
        <taxon>Euteleostomi</taxon>
        <taxon>Amphibia</taxon>
        <taxon>Batrachia</taxon>
        <taxon>Caudata</taxon>
        <taxon>Salamandroidea</taxon>
        <taxon>Salamandridae</taxon>
        <taxon>Pleurodelinae</taxon>
        <taxon>Cynops</taxon>
    </lineage>
</organism>
<proteinExistence type="evidence at transcript level"/>